<accession>Q8KEB6</accession>
<protein>
    <recommendedName>
        <fullName evidence="1">NADH-quinone oxidoreductase subunit K</fullName>
        <ecNumber evidence="1">7.1.1.-</ecNumber>
    </recommendedName>
    <alternativeName>
        <fullName evidence="1">NADH dehydrogenase I subunit K</fullName>
    </alternativeName>
    <alternativeName>
        <fullName evidence="1">NDH-1 subunit K</fullName>
    </alternativeName>
</protein>
<evidence type="ECO:0000255" key="1">
    <source>
        <dbReference type="HAMAP-Rule" id="MF_01456"/>
    </source>
</evidence>
<gene>
    <name evidence="1" type="primary">nuoK</name>
    <name type="ordered locus">CT0773</name>
</gene>
<organism>
    <name type="scientific">Chlorobaculum tepidum (strain ATCC 49652 / DSM 12025 / NBRC 103806 / TLS)</name>
    <name type="common">Chlorobium tepidum</name>
    <dbReference type="NCBI Taxonomy" id="194439"/>
    <lineage>
        <taxon>Bacteria</taxon>
        <taxon>Pseudomonadati</taxon>
        <taxon>Chlorobiota</taxon>
        <taxon>Chlorobiia</taxon>
        <taxon>Chlorobiales</taxon>
        <taxon>Chlorobiaceae</taxon>
        <taxon>Chlorobaculum</taxon>
    </lineage>
</organism>
<feature type="chain" id="PRO_0000390010" description="NADH-quinone oxidoreductase subunit K">
    <location>
        <begin position="1"/>
        <end position="107"/>
    </location>
</feature>
<feature type="transmembrane region" description="Helical" evidence="1">
    <location>
        <begin position="9"/>
        <end position="29"/>
    </location>
</feature>
<feature type="transmembrane region" description="Helical" evidence="1">
    <location>
        <begin position="36"/>
        <end position="56"/>
    </location>
</feature>
<feature type="transmembrane region" description="Helical" evidence="1">
    <location>
        <begin position="68"/>
        <end position="88"/>
    </location>
</feature>
<name>NUOK_CHLTE</name>
<sequence length="107" mass="11590">MLTQQLLSIGVNHFLTISVILFGLGMFAVMTRKNAIVILMGVELILNAANINFLTFSKYNGGMEGVMFSLFVIVLAAAEAAIALAIVINIFKTFKTVDVSSVDTMKE</sequence>
<comment type="function">
    <text evidence="1">NDH-1 shuttles electrons from NADH, via FMN and iron-sulfur (Fe-S) centers, to quinones in the respiratory chain. The immediate electron acceptor for the enzyme in this species is believed to be a menaquinone. Couples the redox reaction to proton translocation (for every two electrons transferred, four hydrogen ions are translocated across the cytoplasmic membrane), and thus conserves the redox energy in a proton gradient.</text>
</comment>
<comment type="catalytic activity">
    <reaction evidence="1">
        <text>a quinone + NADH + 5 H(+)(in) = a quinol + NAD(+) + 4 H(+)(out)</text>
        <dbReference type="Rhea" id="RHEA:57888"/>
        <dbReference type="ChEBI" id="CHEBI:15378"/>
        <dbReference type="ChEBI" id="CHEBI:24646"/>
        <dbReference type="ChEBI" id="CHEBI:57540"/>
        <dbReference type="ChEBI" id="CHEBI:57945"/>
        <dbReference type="ChEBI" id="CHEBI:132124"/>
    </reaction>
</comment>
<comment type="subunit">
    <text evidence="1">NDH-1 is composed of 14 different subunits. Subunits NuoA, H, J, K, L, M, N constitute the membrane sector of the complex.</text>
</comment>
<comment type="subcellular location">
    <subcellularLocation>
        <location evidence="1">Cell inner membrane</location>
        <topology evidence="1">Multi-pass membrane protein</topology>
    </subcellularLocation>
</comment>
<comment type="similarity">
    <text evidence="1">Belongs to the complex I subunit 4L family.</text>
</comment>
<dbReference type="EC" id="7.1.1.-" evidence="1"/>
<dbReference type="EMBL" id="AE006470">
    <property type="protein sequence ID" value="AAM72010.1"/>
    <property type="molecule type" value="Genomic_DNA"/>
</dbReference>
<dbReference type="RefSeq" id="NP_661668.1">
    <property type="nucleotide sequence ID" value="NC_002932.3"/>
</dbReference>
<dbReference type="RefSeq" id="WP_010932455.1">
    <property type="nucleotide sequence ID" value="NC_002932.3"/>
</dbReference>
<dbReference type="SMR" id="Q8KEB6"/>
<dbReference type="STRING" id="194439.CT0773"/>
<dbReference type="EnsemblBacteria" id="AAM72010">
    <property type="protein sequence ID" value="AAM72010"/>
    <property type="gene ID" value="CT0773"/>
</dbReference>
<dbReference type="KEGG" id="cte:CT0773"/>
<dbReference type="PATRIC" id="fig|194439.7.peg.704"/>
<dbReference type="eggNOG" id="COG0713">
    <property type="taxonomic scope" value="Bacteria"/>
</dbReference>
<dbReference type="HOGENOM" id="CLU_144724_0_0_10"/>
<dbReference type="OrthoDB" id="9810120at2"/>
<dbReference type="Proteomes" id="UP000001007">
    <property type="component" value="Chromosome"/>
</dbReference>
<dbReference type="GO" id="GO:0030964">
    <property type="term" value="C:NADH dehydrogenase complex"/>
    <property type="evidence" value="ECO:0007669"/>
    <property type="project" value="TreeGrafter"/>
</dbReference>
<dbReference type="GO" id="GO:0005886">
    <property type="term" value="C:plasma membrane"/>
    <property type="evidence" value="ECO:0007669"/>
    <property type="project" value="UniProtKB-SubCell"/>
</dbReference>
<dbReference type="GO" id="GO:0050136">
    <property type="term" value="F:NADH:ubiquinone reductase (non-electrogenic) activity"/>
    <property type="evidence" value="ECO:0007669"/>
    <property type="project" value="UniProtKB-UniRule"/>
</dbReference>
<dbReference type="GO" id="GO:0048038">
    <property type="term" value="F:quinone binding"/>
    <property type="evidence" value="ECO:0007669"/>
    <property type="project" value="UniProtKB-KW"/>
</dbReference>
<dbReference type="GO" id="GO:0042773">
    <property type="term" value="P:ATP synthesis coupled electron transport"/>
    <property type="evidence" value="ECO:0007669"/>
    <property type="project" value="InterPro"/>
</dbReference>
<dbReference type="FunFam" id="1.10.287.3510:FF:000001">
    <property type="entry name" value="NADH-quinone oxidoreductase subunit K"/>
    <property type="match status" value="1"/>
</dbReference>
<dbReference type="Gene3D" id="1.10.287.3510">
    <property type="match status" value="1"/>
</dbReference>
<dbReference type="HAMAP" id="MF_01456">
    <property type="entry name" value="NDH1_NuoK"/>
    <property type="match status" value="1"/>
</dbReference>
<dbReference type="InterPro" id="IPR001133">
    <property type="entry name" value="NADH_UbQ_OxRdtase_chain4L/K"/>
</dbReference>
<dbReference type="InterPro" id="IPR039428">
    <property type="entry name" value="NUOK/Mnh_C1-like"/>
</dbReference>
<dbReference type="NCBIfam" id="NF004320">
    <property type="entry name" value="PRK05715.1-2"/>
    <property type="match status" value="1"/>
</dbReference>
<dbReference type="NCBIfam" id="NF004323">
    <property type="entry name" value="PRK05715.1-5"/>
    <property type="match status" value="1"/>
</dbReference>
<dbReference type="PANTHER" id="PTHR11434:SF16">
    <property type="entry name" value="NADH-UBIQUINONE OXIDOREDUCTASE CHAIN 4L"/>
    <property type="match status" value="1"/>
</dbReference>
<dbReference type="PANTHER" id="PTHR11434">
    <property type="entry name" value="NADH-UBIQUINONE OXIDOREDUCTASE SUBUNIT ND4L"/>
    <property type="match status" value="1"/>
</dbReference>
<dbReference type="Pfam" id="PF00420">
    <property type="entry name" value="Oxidored_q2"/>
    <property type="match status" value="1"/>
</dbReference>
<keyword id="KW-0997">Cell inner membrane</keyword>
<keyword id="KW-1003">Cell membrane</keyword>
<keyword id="KW-0472">Membrane</keyword>
<keyword id="KW-0520">NAD</keyword>
<keyword id="KW-0874">Quinone</keyword>
<keyword id="KW-1185">Reference proteome</keyword>
<keyword id="KW-1278">Translocase</keyword>
<keyword id="KW-0812">Transmembrane</keyword>
<keyword id="KW-1133">Transmembrane helix</keyword>
<keyword id="KW-0813">Transport</keyword>
<reference key="1">
    <citation type="journal article" date="2002" name="Proc. Natl. Acad. Sci. U.S.A.">
        <title>The complete genome sequence of Chlorobium tepidum TLS, a photosynthetic, anaerobic, green-sulfur bacterium.</title>
        <authorList>
            <person name="Eisen J.A."/>
            <person name="Nelson K.E."/>
            <person name="Paulsen I.T."/>
            <person name="Heidelberg J.F."/>
            <person name="Wu M."/>
            <person name="Dodson R.J."/>
            <person name="DeBoy R.T."/>
            <person name="Gwinn M.L."/>
            <person name="Nelson W.C."/>
            <person name="Haft D.H."/>
            <person name="Hickey E.K."/>
            <person name="Peterson J.D."/>
            <person name="Durkin A.S."/>
            <person name="Kolonay J.F."/>
            <person name="Yang F."/>
            <person name="Holt I.E."/>
            <person name="Umayam L.A."/>
            <person name="Mason T.M."/>
            <person name="Brenner M."/>
            <person name="Shea T.P."/>
            <person name="Parksey D.S."/>
            <person name="Nierman W.C."/>
            <person name="Feldblyum T.V."/>
            <person name="Hansen C.L."/>
            <person name="Craven M.B."/>
            <person name="Radune D."/>
            <person name="Vamathevan J.J."/>
            <person name="Khouri H.M."/>
            <person name="White O."/>
            <person name="Gruber T.M."/>
            <person name="Ketchum K.A."/>
            <person name="Venter J.C."/>
            <person name="Tettelin H."/>
            <person name="Bryant D.A."/>
            <person name="Fraser C.M."/>
        </authorList>
    </citation>
    <scope>NUCLEOTIDE SEQUENCE [LARGE SCALE GENOMIC DNA]</scope>
    <source>
        <strain>ATCC 49652 / DSM 12025 / NBRC 103806 / TLS</strain>
    </source>
</reference>
<proteinExistence type="inferred from homology"/>